<reference key="1">
    <citation type="submission" date="1999-01" db="EMBL/GenBank/DDBJ databases">
        <title>hrcA in Streptococcus pneumoniae.</title>
        <authorList>
            <person name="Kim S.-N."/>
            <person name="Kim S.-W."/>
            <person name="Choi I.-H."/>
            <person name="Rhee D.-K."/>
        </authorList>
    </citation>
    <scope>NUCLEOTIDE SEQUENCE [GENOMIC DNA]</scope>
    <source>
        <strain>Rx / CP1200</strain>
    </source>
</reference>
<reference key="2">
    <citation type="journal article" date="2001" name="Science">
        <title>Complete genome sequence of a virulent isolate of Streptococcus pneumoniae.</title>
        <authorList>
            <person name="Tettelin H."/>
            <person name="Nelson K.E."/>
            <person name="Paulsen I.T."/>
            <person name="Eisen J.A."/>
            <person name="Read T.D."/>
            <person name="Peterson S.N."/>
            <person name="Heidelberg J.F."/>
            <person name="DeBoy R.T."/>
            <person name="Haft D.H."/>
            <person name="Dodson R.J."/>
            <person name="Durkin A.S."/>
            <person name="Gwinn M.L."/>
            <person name="Kolonay J.F."/>
            <person name="Nelson W.C."/>
            <person name="Peterson J.D."/>
            <person name="Umayam L.A."/>
            <person name="White O."/>
            <person name="Salzberg S.L."/>
            <person name="Lewis M.R."/>
            <person name="Radune D."/>
            <person name="Holtzapple E.K."/>
            <person name="Khouri H.M."/>
            <person name="Wolf A.M."/>
            <person name="Utterback T.R."/>
            <person name="Hansen C.L."/>
            <person name="McDonald L.A."/>
            <person name="Feldblyum T.V."/>
            <person name="Angiuoli S.V."/>
            <person name="Dickinson T."/>
            <person name="Hickey E.K."/>
            <person name="Holt I.E."/>
            <person name="Loftus B.J."/>
            <person name="Yang F."/>
            <person name="Smith H.O."/>
            <person name="Venter J.C."/>
            <person name="Dougherty B.A."/>
            <person name="Morrison D.A."/>
            <person name="Hollingshead S.K."/>
            <person name="Fraser C.M."/>
        </authorList>
    </citation>
    <scope>NUCLEOTIDE SEQUENCE [LARGE SCALE GENOMIC DNA]</scope>
    <source>
        <strain>ATCC BAA-334 / TIGR4</strain>
    </source>
</reference>
<proteinExistence type="inferred from homology"/>
<feature type="chain" id="PRO_0000182540" description="Heat-inducible transcription repressor HrcA">
    <location>
        <begin position="1"/>
        <end position="344"/>
    </location>
</feature>
<feature type="sequence conflict" description="In Ref. 1; AAD23452." evidence="2" ref="1">
    <original>H</original>
    <variation>N</variation>
    <location>
        <position position="236"/>
    </location>
</feature>
<feature type="sequence conflict" description="In Ref. 1; AAD23452." evidence="2" ref="1">
    <original>R</original>
    <variation>A</variation>
    <location>
        <position position="272"/>
    </location>
</feature>
<feature type="sequence conflict" description="In Ref. 1; AAD23452." evidence="2" ref="1">
    <original>V</original>
    <variation>I</variation>
    <location>
        <position position="318"/>
    </location>
</feature>
<name>HRCA_STRPN</name>
<comment type="function">
    <text evidence="1">Negative regulator of class I heat shock genes (grpE-dnaK-dnaJ and groELS operons). Prevents heat-shock induction of these operons.</text>
</comment>
<comment type="similarity">
    <text evidence="1">Belongs to the HrcA family.</text>
</comment>
<evidence type="ECO:0000255" key="1">
    <source>
        <dbReference type="HAMAP-Rule" id="MF_00081"/>
    </source>
</evidence>
<evidence type="ECO:0000305" key="2"/>
<organism>
    <name type="scientific">Streptococcus pneumoniae serotype 4 (strain ATCC BAA-334 / TIGR4)</name>
    <dbReference type="NCBI Taxonomy" id="170187"/>
    <lineage>
        <taxon>Bacteria</taxon>
        <taxon>Bacillati</taxon>
        <taxon>Bacillota</taxon>
        <taxon>Bacilli</taxon>
        <taxon>Lactobacillales</taxon>
        <taxon>Streptococcaceae</taxon>
        <taxon>Streptococcus</taxon>
    </lineage>
</organism>
<keyword id="KW-1185">Reference proteome</keyword>
<keyword id="KW-0678">Repressor</keyword>
<keyword id="KW-0346">Stress response</keyword>
<keyword id="KW-0804">Transcription</keyword>
<keyword id="KW-0805">Transcription regulation</keyword>
<gene>
    <name evidence="1" type="primary">hrcA</name>
    <name type="ordered locus">SP_0515</name>
</gene>
<dbReference type="EMBL" id="AF117740">
    <property type="protein sequence ID" value="AAD23452.1"/>
    <property type="molecule type" value="Genomic_DNA"/>
</dbReference>
<dbReference type="EMBL" id="AE005672">
    <property type="protein sequence ID" value="AAK74673.1"/>
    <property type="molecule type" value="Genomic_DNA"/>
</dbReference>
<dbReference type="PIR" id="H95059">
    <property type="entry name" value="H95059"/>
</dbReference>
<dbReference type="RefSeq" id="WP_000255768.1">
    <property type="nucleotide sequence ID" value="NZ_CP155539.1"/>
</dbReference>
<dbReference type="SMR" id="Q9X4R2"/>
<dbReference type="PaxDb" id="170187-SP_0515"/>
<dbReference type="EnsemblBacteria" id="AAK74673">
    <property type="protein sequence ID" value="AAK74673"/>
    <property type="gene ID" value="SP_0515"/>
</dbReference>
<dbReference type="KEGG" id="spn:SP_0515"/>
<dbReference type="eggNOG" id="COG1420">
    <property type="taxonomic scope" value="Bacteria"/>
</dbReference>
<dbReference type="PhylomeDB" id="Q9X4R2"/>
<dbReference type="BioCyc" id="SPNE170187:G1FZB-530-MONOMER"/>
<dbReference type="Proteomes" id="UP000000585">
    <property type="component" value="Chromosome"/>
</dbReference>
<dbReference type="GO" id="GO:0003677">
    <property type="term" value="F:DNA binding"/>
    <property type="evidence" value="ECO:0007669"/>
    <property type="project" value="InterPro"/>
</dbReference>
<dbReference type="GO" id="GO:0045892">
    <property type="term" value="P:negative regulation of DNA-templated transcription"/>
    <property type="evidence" value="ECO:0007669"/>
    <property type="project" value="UniProtKB-UniRule"/>
</dbReference>
<dbReference type="Gene3D" id="3.30.450.40">
    <property type="match status" value="1"/>
</dbReference>
<dbReference type="Gene3D" id="3.30.390.60">
    <property type="entry name" value="Heat-inducible transcription repressor hrca homolog, domain 3"/>
    <property type="match status" value="1"/>
</dbReference>
<dbReference type="Gene3D" id="1.10.10.10">
    <property type="entry name" value="Winged helix-like DNA-binding domain superfamily/Winged helix DNA-binding domain"/>
    <property type="match status" value="1"/>
</dbReference>
<dbReference type="HAMAP" id="MF_00081">
    <property type="entry name" value="HrcA"/>
    <property type="match status" value="1"/>
</dbReference>
<dbReference type="InterPro" id="IPR029016">
    <property type="entry name" value="GAF-like_dom_sf"/>
</dbReference>
<dbReference type="InterPro" id="IPR002571">
    <property type="entry name" value="HrcA"/>
</dbReference>
<dbReference type="InterPro" id="IPR021153">
    <property type="entry name" value="HrcA_C"/>
</dbReference>
<dbReference type="InterPro" id="IPR036388">
    <property type="entry name" value="WH-like_DNA-bd_sf"/>
</dbReference>
<dbReference type="InterPro" id="IPR036390">
    <property type="entry name" value="WH_DNA-bd_sf"/>
</dbReference>
<dbReference type="InterPro" id="IPR005104">
    <property type="entry name" value="WHTH_HrcA_DNA-bd"/>
</dbReference>
<dbReference type="InterPro" id="IPR023120">
    <property type="entry name" value="WHTH_transcript_rep_HrcA_IDD"/>
</dbReference>
<dbReference type="NCBIfam" id="TIGR00331">
    <property type="entry name" value="hrcA"/>
    <property type="match status" value="1"/>
</dbReference>
<dbReference type="PANTHER" id="PTHR34824">
    <property type="entry name" value="HEAT-INDUCIBLE TRANSCRIPTION REPRESSOR HRCA"/>
    <property type="match status" value="1"/>
</dbReference>
<dbReference type="PANTHER" id="PTHR34824:SF1">
    <property type="entry name" value="HEAT-INDUCIBLE TRANSCRIPTION REPRESSOR HRCA"/>
    <property type="match status" value="1"/>
</dbReference>
<dbReference type="Pfam" id="PF01628">
    <property type="entry name" value="HrcA"/>
    <property type="match status" value="1"/>
</dbReference>
<dbReference type="Pfam" id="PF03444">
    <property type="entry name" value="HrcA_DNA-bdg"/>
    <property type="match status" value="1"/>
</dbReference>
<dbReference type="PIRSF" id="PIRSF005485">
    <property type="entry name" value="HrcA"/>
    <property type="match status" value="1"/>
</dbReference>
<dbReference type="SUPFAM" id="SSF55781">
    <property type="entry name" value="GAF domain-like"/>
    <property type="match status" value="1"/>
</dbReference>
<dbReference type="SUPFAM" id="SSF46785">
    <property type="entry name" value="Winged helix' DNA-binding domain"/>
    <property type="match status" value="1"/>
</dbReference>
<accession>Q9X4R2</accession>
<protein>
    <recommendedName>
        <fullName evidence="1">Heat-inducible transcription repressor HrcA</fullName>
    </recommendedName>
</protein>
<sequence>MVTERQQDILNLIIDIFTKTHEPVGSKALQESINSSSATIRNDMAELEKQGLLEKAHTSSGRMPSVAGFQYYVKHSLDFDRLAENEVYEIVKAFDQEFFKLEDILQEAANLLTDLSGCTVVALDVEPSRQRLTAFDIVVLGQHTALAVFTLDESRTVTSQFLIPRNFLQEDLLKLKSIIQERFLGHTVLDIHYKIRTEIPQIIQRYFTTTDNVIDLFEHIFKEMFNENIVMAGKVHLLNFANLAAYQFFDQPQKVALEIREGLREDQMQNVRVADGQESCLADLAVISSKFLIPYRGVGILAIIGPVNLDYQQLINQVNVVNRVLTMKLTDFYRYLSSNHYEVH</sequence>